<feature type="chain" id="PRO_1000165720" description="Large ribosomal subunit protein uL2">
    <location>
        <begin position="1"/>
        <end position="276"/>
    </location>
</feature>
<feature type="region of interest" description="Disordered" evidence="2">
    <location>
        <begin position="1"/>
        <end position="20"/>
    </location>
</feature>
<feature type="region of interest" description="Disordered" evidence="2">
    <location>
        <begin position="219"/>
        <end position="276"/>
    </location>
</feature>
<feature type="compositionally biased region" description="Polar residues" evidence="2">
    <location>
        <begin position="7"/>
        <end position="20"/>
    </location>
</feature>
<keyword id="KW-0687">Ribonucleoprotein</keyword>
<keyword id="KW-0689">Ribosomal protein</keyword>
<keyword id="KW-0694">RNA-binding</keyword>
<keyword id="KW-0699">rRNA-binding</keyword>
<dbReference type="EMBL" id="CP001215">
    <property type="protein sequence ID" value="ACP13701.1"/>
    <property type="molecule type" value="Genomic_DNA"/>
</dbReference>
<dbReference type="RefSeq" id="WP_000511580.1">
    <property type="nucleotide sequence ID" value="NC_012581.1"/>
</dbReference>
<dbReference type="SMR" id="C3LJ85"/>
<dbReference type="GeneID" id="93010940"/>
<dbReference type="KEGG" id="bah:BAMEG_0129"/>
<dbReference type="HOGENOM" id="CLU_036235_2_1_9"/>
<dbReference type="GO" id="GO:0015934">
    <property type="term" value="C:large ribosomal subunit"/>
    <property type="evidence" value="ECO:0007669"/>
    <property type="project" value="InterPro"/>
</dbReference>
<dbReference type="GO" id="GO:0019843">
    <property type="term" value="F:rRNA binding"/>
    <property type="evidence" value="ECO:0007669"/>
    <property type="project" value="UniProtKB-UniRule"/>
</dbReference>
<dbReference type="GO" id="GO:0003735">
    <property type="term" value="F:structural constituent of ribosome"/>
    <property type="evidence" value="ECO:0007669"/>
    <property type="project" value="InterPro"/>
</dbReference>
<dbReference type="GO" id="GO:0016740">
    <property type="term" value="F:transferase activity"/>
    <property type="evidence" value="ECO:0007669"/>
    <property type="project" value="InterPro"/>
</dbReference>
<dbReference type="GO" id="GO:0002181">
    <property type="term" value="P:cytoplasmic translation"/>
    <property type="evidence" value="ECO:0007669"/>
    <property type="project" value="TreeGrafter"/>
</dbReference>
<dbReference type="FunFam" id="2.30.30.30:FF:000001">
    <property type="entry name" value="50S ribosomal protein L2"/>
    <property type="match status" value="1"/>
</dbReference>
<dbReference type="FunFam" id="2.40.50.140:FF:000003">
    <property type="entry name" value="50S ribosomal protein L2"/>
    <property type="match status" value="1"/>
</dbReference>
<dbReference type="FunFam" id="4.10.950.10:FF:000001">
    <property type="entry name" value="50S ribosomal protein L2"/>
    <property type="match status" value="1"/>
</dbReference>
<dbReference type="Gene3D" id="2.30.30.30">
    <property type="match status" value="1"/>
</dbReference>
<dbReference type="Gene3D" id="2.40.50.140">
    <property type="entry name" value="Nucleic acid-binding proteins"/>
    <property type="match status" value="1"/>
</dbReference>
<dbReference type="Gene3D" id="4.10.950.10">
    <property type="entry name" value="Ribosomal protein L2, domain 3"/>
    <property type="match status" value="1"/>
</dbReference>
<dbReference type="HAMAP" id="MF_01320_B">
    <property type="entry name" value="Ribosomal_uL2_B"/>
    <property type="match status" value="1"/>
</dbReference>
<dbReference type="InterPro" id="IPR012340">
    <property type="entry name" value="NA-bd_OB-fold"/>
</dbReference>
<dbReference type="InterPro" id="IPR014722">
    <property type="entry name" value="Rib_uL2_dom2"/>
</dbReference>
<dbReference type="InterPro" id="IPR002171">
    <property type="entry name" value="Ribosomal_uL2"/>
</dbReference>
<dbReference type="InterPro" id="IPR005880">
    <property type="entry name" value="Ribosomal_uL2_bac/org-type"/>
</dbReference>
<dbReference type="InterPro" id="IPR022669">
    <property type="entry name" value="Ribosomal_uL2_C"/>
</dbReference>
<dbReference type="InterPro" id="IPR022671">
    <property type="entry name" value="Ribosomal_uL2_CS"/>
</dbReference>
<dbReference type="InterPro" id="IPR014726">
    <property type="entry name" value="Ribosomal_uL2_dom3"/>
</dbReference>
<dbReference type="InterPro" id="IPR022666">
    <property type="entry name" value="Ribosomal_uL2_RNA-bd_dom"/>
</dbReference>
<dbReference type="InterPro" id="IPR008991">
    <property type="entry name" value="Translation_prot_SH3-like_sf"/>
</dbReference>
<dbReference type="NCBIfam" id="TIGR01171">
    <property type="entry name" value="rplB_bact"/>
    <property type="match status" value="1"/>
</dbReference>
<dbReference type="PANTHER" id="PTHR13691:SF5">
    <property type="entry name" value="LARGE RIBOSOMAL SUBUNIT PROTEIN UL2M"/>
    <property type="match status" value="1"/>
</dbReference>
<dbReference type="PANTHER" id="PTHR13691">
    <property type="entry name" value="RIBOSOMAL PROTEIN L2"/>
    <property type="match status" value="1"/>
</dbReference>
<dbReference type="Pfam" id="PF00181">
    <property type="entry name" value="Ribosomal_L2"/>
    <property type="match status" value="1"/>
</dbReference>
<dbReference type="Pfam" id="PF03947">
    <property type="entry name" value="Ribosomal_L2_C"/>
    <property type="match status" value="1"/>
</dbReference>
<dbReference type="PIRSF" id="PIRSF002158">
    <property type="entry name" value="Ribosomal_L2"/>
    <property type="match status" value="1"/>
</dbReference>
<dbReference type="SMART" id="SM01383">
    <property type="entry name" value="Ribosomal_L2"/>
    <property type="match status" value="1"/>
</dbReference>
<dbReference type="SMART" id="SM01382">
    <property type="entry name" value="Ribosomal_L2_C"/>
    <property type="match status" value="1"/>
</dbReference>
<dbReference type="SUPFAM" id="SSF50249">
    <property type="entry name" value="Nucleic acid-binding proteins"/>
    <property type="match status" value="1"/>
</dbReference>
<dbReference type="SUPFAM" id="SSF50104">
    <property type="entry name" value="Translation proteins SH3-like domain"/>
    <property type="match status" value="1"/>
</dbReference>
<dbReference type="PROSITE" id="PS00467">
    <property type="entry name" value="RIBOSOMAL_L2"/>
    <property type="match status" value="1"/>
</dbReference>
<gene>
    <name evidence="1" type="primary">rplB</name>
    <name type="ordered locus">BAMEG_0129</name>
</gene>
<sequence length="276" mass="30253">MGIKKYNPTTNGRRNMTTNDFAEITTDRPEKSLLAPLSKKAGRNNQGKITVRHQGGGHKRQYRIIDFKRNKDGIPGRVATIEYDPNRSANIALINYVDGEKRYILAPKNLEVGMEIMSGAEADIKIGNALPLINIPVGTVVHNIELKPGRGGQLVRSAGTSAQVLGKEGKYVLVRLTSGEVRLVLSACRATVGQVGNESHELIKIGKAGRSRWLGKRPTVRGSVMNPVDHPHGGGEGRSPIGRKSPMSPWGKPTLGFKTRKKNKASDKFIVRRRKK</sequence>
<proteinExistence type="inferred from homology"/>
<evidence type="ECO:0000255" key="1">
    <source>
        <dbReference type="HAMAP-Rule" id="MF_01320"/>
    </source>
</evidence>
<evidence type="ECO:0000256" key="2">
    <source>
        <dbReference type="SAM" id="MobiDB-lite"/>
    </source>
</evidence>
<evidence type="ECO:0000305" key="3"/>
<organism>
    <name type="scientific">Bacillus anthracis (strain CDC 684 / NRRL 3495)</name>
    <dbReference type="NCBI Taxonomy" id="568206"/>
    <lineage>
        <taxon>Bacteria</taxon>
        <taxon>Bacillati</taxon>
        <taxon>Bacillota</taxon>
        <taxon>Bacilli</taxon>
        <taxon>Bacillales</taxon>
        <taxon>Bacillaceae</taxon>
        <taxon>Bacillus</taxon>
        <taxon>Bacillus cereus group</taxon>
    </lineage>
</organism>
<name>RL2_BACAC</name>
<accession>C3LJ85</accession>
<reference key="1">
    <citation type="submission" date="2008-10" db="EMBL/GenBank/DDBJ databases">
        <title>Genome sequence of Bacillus anthracis str. CDC 684.</title>
        <authorList>
            <person name="Dodson R.J."/>
            <person name="Munk A.C."/>
            <person name="Brettin T."/>
            <person name="Bruce D."/>
            <person name="Detter C."/>
            <person name="Tapia R."/>
            <person name="Han C."/>
            <person name="Sutton G."/>
            <person name="Sims D."/>
        </authorList>
    </citation>
    <scope>NUCLEOTIDE SEQUENCE [LARGE SCALE GENOMIC DNA]</scope>
    <source>
        <strain>CDC 684 / NRRL 3495</strain>
    </source>
</reference>
<comment type="function">
    <text evidence="1">One of the primary rRNA binding proteins. Required for association of the 30S and 50S subunits to form the 70S ribosome, for tRNA binding and peptide bond formation. It has been suggested to have peptidyltransferase activity; this is somewhat controversial. Makes several contacts with the 16S rRNA in the 70S ribosome.</text>
</comment>
<comment type="subunit">
    <text evidence="1">Part of the 50S ribosomal subunit. Forms a bridge to the 30S subunit in the 70S ribosome.</text>
</comment>
<comment type="similarity">
    <text evidence="1">Belongs to the universal ribosomal protein uL2 family.</text>
</comment>
<protein>
    <recommendedName>
        <fullName evidence="1">Large ribosomal subunit protein uL2</fullName>
    </recommendedName>
    <alternativeName>
        <fullName evidence="3">50S ribosomal protein L2</fullName>
    </alternativeName>
</protein>